<organism>
    <name type="scientific">Clavibacter sepedonicus</name>
    <name type="common">Clavibacter michiganensis subsp. sepedonicus</name>
    <dbReference type="NCBI Taxonomy" id="31964"/>
    <lineage>
        <taxon>Bacteria</taxon>
        <taxon>Bacillati</taxon>
        <taxon>Actinomycetota</taxon>
        <taxon>Actinomycetes</taxon>
        <taxon>Micrococcales</taxon>
        <taxon>Microbacteriaceae</taxon>
        <taxon>Clavibacter</taxon>
    </lineage>
</organism>
<evidence type="ECO:0000255" key="1">
    <source>
        <dbReference type="HAMAP-Rule" id="MF_00159"/>
    </source>
</evidence>
<sequence>MPAVNLGMPKVPEVLAPRRKTRQISVGKVKVGGNAQVSVQSMTTTQTTNINATLQQIAELTATGCDIVRVAVPHQDDADVLHILAKKSQIPIIADIHFQPRYVFTAIDAGVGAVRVNPGNIRKFDDQVGAIAKAAKAAGTSIRIGVNAGSLHPSLLQKYGKATPEALVESAVWEASLFEEHDFHDFKISVKHNDPVIMVKAYRLLAERGDWPLHLGVTEAGPAFQGTIKSATAFGILLSEGIGDTIRVSLSAPPAEEVKVGLQILQSLNLRERKLEIVSCPSCGRAQVDVYSLAEQVTEGLKHVNVPLRVAVMGCVVNGPGEAREAELGVASGNGRGQIFVKGEVIKTVPESEIVQTLIEEANRLAAEMPAGSIGSPEILV</sequence>
<proteinExistence type="inferred from homology"/>
<keyword id="KW-0004">4Fe-4S</keyword>
<keyword id="KW-0408">Iron</keyword>
<keyword id="KW-0411">Iron-sulfur</keyword>
<keyword id="KW-0414">Isoprene biosynthesis</keyword>
<keyword id="KW-0479">Metal-binding</keyword>
<keyword id="KW-0560">Oxidoreductase</keyword>
<feature type="chain" id="PRO_1000076881" description="4-hydroxy-3-methylbut-2-en-1-yl diphosphate synthase (flavodoxin)">
    <location>
        <begin position="1"/>
        <end position="381"/>
    </location>
</feature>
<feature type="binding site" evidence="1">
    <location>
        <position position="280"/>
    </location>
    <ligand>
        <name>[4Fe-4S] cluster</name>
        <dbReference type="ChEBI" id="CHEBI:49883"/>
    </ligand>
</feature>
<feature type="binding site" evidence="1">
    <location>
        <position position="283"/>
    </location>
    <ligand>
        <name>[4Fe-4S] cluster</name>
        <dbReference type="ChEBI" id="CHEBI:49883"/>
    </ligand>
</feature>
<feature type="binding site" evidence="1">
    <location>
        <position position="315"/>
    </location>
    <ligand>
        <name>[4Fe-4S] cluster</name>
        <dbReference type="ChEBI" id="CHEBI:49883"/>
    </ligand>
</feature>
<feature type="binding site" evidence="1">
    <location>
        <position position="322"/>
    </location>
    <ligand>
        <name>[4Fe-4S] cluster</name>
        <dbReference type="ChEBI" id="CHEBI:49883"/>
    </ligand>
</feature>
<name>ISPG_CLASE</name>
<comment type="function">
    <text evidence="1">Converts 2C-methyl-D-erythritol 2,4-cyclodiphosphate (ME-2,4cPP) into 1-hydroxy-2-methyl-2-(E)-butenyl 4-diphosphate.</text>
</comment>
<comment type="catalytic activity">
    <reaction evidence="1">
        <text>(2E)-4-hydroxy-3-methylbut-2-enyl diphosphate + oxidized [flavodoxin] + H2O + 2 H(+) = 2-C-methyl-D-erythritol 2,4-cyclic diphosphate + reduced [flavodoxin]</text>
        <dbReference type="Rhea" id="RHEA:43604"/>
        <dbReference type="Rhea" id="RHEA-COMP:10622"/>
        <dbReference type="Rhea" id="RHEA-COMP:10623"/>
        <dbReference type="ChEBI" id="CHEBI:15377"/>
        <dbReference type="ChEBI" id="CHEBI:15378"/>
        <dbReference type="ChEBI" id="CHEBI:57618"/>
        <dbReference type="ChEBI" id="CHEBI:58210"/>
        <dbReference type="ChEBI" id="CHEBI:58483"/>
        <dbReference type="ChEBI" id="CHEBI:128753"/>
        <dbReference type="EC" id="1.17.7.3"/>
    </reaction>
</comment>
<comment type="cofactor">
    <cofactor evidence="1">
        <name>[4Fe-4S] cluster</name>
        <dbReference type="ChEBI" id="CHEBI:49883"/>
    </cofactor>
    <text evidence="1">Binds 1 [4Fe-4S] cluster.</text>
</comment>
<comment type="pathway">
    <text evidence="1">Isoprenoid biosynthesis; isopentenyl diphosphate biosynthesis via DXP pathway; isopentenyl diphosphate from 1-deoxy-D-xylulose 5-phosphate: step 5/6.</text>
</comment>
<comment type="similarity">
    <text evidence="1">Belongs to the IspG family.</text>
</comment>
<protein>
    <recommendedName>
        <fullName evidence="1">4-hydroxy-3-methylbut-2-en-1-yl diphosphate synthase (flavodoxin)</fullName>
        <ecNumber evidence="1">1.17.7.3</ecNumber>
    </recommendedName>
    <alternativeName>
        <fullName evidence="1">1-hydroxy-2-methyl-2-(E)-butenyl 4-diphosphate synthase</fullName>
    </alternativeName>
</protein>
<gene>
    <name evidence="1" type="primary">ispG</name>
    <name type="ordered locus">CMS1849</name>
</gene>
<dbReference type="EC" id="1.17.7.3" evidence="1"/>
<dbReference type="EMBL" id="AM849034">
    <property type="protein sequence ID" value="CAQ01954.1"/>
    <property type="molecule type" value="Genomic_DNA"/>
</dbReference>
<dbReference type="SMR" id="B0RDZ5"/>
<dbReference type="STRING" id="31964.CMS1849"/>
<dbReference type="KEGG" id="cms:CMS1849"/>
<dbReference type="eggNOG" id="COG0821">
    <property type="taxonomic scope" value="Bacteria"/>
</dbReference>
<dbReference type="HOGENOM" id="CLU_042258_0_0_11"/>
<dbReference type="UniPathway" id="UPA00056">
    <property type="reaction ID" value="UER00096"/>
</dbReference>
<dbReference type="Proteomes" id="UP000001318">
    <property type="component" value="Chromosome"/>
</dbReference>
<dbReference type="GO" id="GO:0051539">
    <property type="term" value="F:4 iron, 4 sulfur cluster binding"/>
    <property type="evidence" value="ECO:0007669"/>
    <property type="project" value="UniProtKB-UniRule"/>
</dbReference>
<dbReference type="GO" id="GO:0046429">
    <property type="term" value="F:4-hydroxy-3-methylbut-2-en-1-yl diphosphate synthase activity (ferredoxin)"/>
    <property type="evidence" value="ECO:0007669"/>
    <property type="project" value="UniProtKB-UniRule"/>
</dbReference>
<dbReference type="GO" id="GO:0141197">
    <property type="term" value="F:4-hydroxy-3-methylbut-2-enyl-diphosphate synthase activity (flavodoxin)"/>
    <property type="evidence" value="ECO:0007669"/>
    <property type="project" value="UniProtKB-EC"/>
</dbReference>
<dbReference type="GO" id="GO:0005506">
    <property type="term" value="F:iron ion binding"/>
    <property type="evidence" value="ECO:0007669"/>
    <property type="project" value="InterPro"/>
</dbReference>
<dbReference type="GO" id="GO:0019288">
    <property type="term" value="P:isopentenyl diphosphate biosynthetic process, methylerythritol 4-phosphate pathway"/>
    <property type="evidence" value="ECO:0007669"/>
    <property type="project" value="UniProtKB-UniRule"/>
</dbReference>
<dbReference type="GO" id="GO:0016114">
    <property type="term" value="P:terpenoid biosynthetic process"/>
    <property type="evidence" value="ECO:0007669"/>
    <property type="project" value="InterPro"/>
</dbReference>
<dbReference type="FunFam" id="3.20.20.20:FF:000001">
    <property type="entry name" value="4-hydroxy-3-methylbut-2-en-1-yl diphosphate synthase (flavodoxin)"/>
    <property type="match status" value="1"/>
</dbReference>
<dbReference type="Gene3D" id="3.20.20.20">
    <property type="entry name" value="Dihydropteroate synthase-like"/>
    <property type="match status" value="1"/>
</dbReference>
<dbReference type="Gene3D" id="3.30.413.10">
    <property type="entry name" value="Sulfite Reductase Hemoprotein, domain 1"/>
    <property type="match status" value="1"/>
</dbReference>
<dbReference type="HAMAP" id="MF_00159">
    <property type="entry name" value="IspG"/>
    <property type="match status" value="1"/>
</dbReference>
<dbReference type="InterPro" id="IPR011005">
    <property type="entry name" value="Dihydropteroate_synth-like_sf"/>
</dbReference>
<dbReference type="InterPro" id="IPR016425">
    <property type="entry name" value="IspG_bac"/>
</dbReference>
<dbReference type="InterPro" id="IPR004588">
    <property type="entry name" value="IspG_bac-typ"/>
</dbReference>
<dbReference type="InterPro" id="IPR045854">
    <property type="entry name" value="NO2/SO3_Rdtase_4Fe4S_sf"/>
</dbReference>
<dbReference type="NCBIfam" id="TIGR00612">
    <property type="entry name" value="ispG_gcpE"/>
    <property type="match status" value="1"/>
</dbReference>
<dbReference type="NCBIfam" id="NF001540">
    <property type="entry name" value="PRK00366.1"/>
    <property type="match status" value="1"/>
</dbReference>
<dbReference type="PANTHER" id="PTHR30454">
    <property type="entry name" value="4-HYDROXY-3-METHYLBUT-2-EN-1-YL DIPHOSPHATE SYNTHASE"/>
    <property type="match status" value="1"/>
</dbReference>
<dbReference type="PANTHER" id="PTHR30454:SF0">
    <property type="entry name" value="4-HYDROXY-3-METHYLBUT-2-EN-1-YL DIPHOSPHATE SYNTHASE (FERREDOXIN), CHLOROPLASTIC"/>
    <property type="match status" value="1"/>
</dbReference>
<dbReference type="Pfam" id="PF04551">
    <property type="entry name" value="GcpE"/>
    <property type="match status" value="1"/>
</dbReference>
<dbReference type="PIRSF" id="PIRSF004640">
    <property type="entry name" value="IspG"/>
    <property type="match status" value="1"/>
</dbReference>
<dbReference type="SUPFAM" id="SSF51717">
    <property type="entry name" value="Dihydropteroate synthetase-like"/>
    <property type="match status" value="1"/>
</dbReference>
<dbReference type="SUPFAM" id="SSF56014">
    <property type="entry name" value="Nitrite and sulphite reductase 4Fe-4S domain-like"/>
    <property type="match status" value="1"/>
</dbReference>
<reference key="1">
    <citation type="journal article" date="2008" name="J. Bacteriol.">
        <title>Genome of the actinomycete plant pathogen Clavibacter michiganensis subsp. sepedonicus suggests recent niche adaptation.</title>
        <authorList>
            <person name="Bentley S.D."/>
            <person name="Corton C."/>
            <person name="Brown S.E."/>
            <person name="Barron A."/>
            <person name="Clark L."/>
            <person name="Doggett J."/>
            <person name="Harris B."/>
            <person name="Ormond D."/>
            <person name="Quail M.A."/>
            <person name="May G."/>
            <person name="Francis D."/>
            <person name="Knudson D."/>
            <person name="Parkhill J."/>
            <person name="Ishimaru C.A."/>
        </authorList>
    </citation>
    <scope>NUCLEOTIDE SEQUENCE [LARGE SCALE GENOMIC DNA]</scope>
    <source>
        <strain>ATCC 33113 / DSM 20744 / JCM 9667 / LMG 2889 / ICMP 2535 / C-1</strain>
    </source>
</reference>
<accession>B0RDZ5</accession>